<protein>
    <recommendedName>
        <fullName>Ethylene-responsive transcription factor 6</fullName>
        <shortName>AtERF6</shortName>
    </recommendedName>
    <alternativeName>
        <fullName>Ethylene-responsive element-binding factor 6</fullName>
        <shortName>EREBP-6</shortName>
    </alternativeName>
</protein>
<evidence type="ECO:0000250" key="1"/>
<evidence type="ECO:0000255" key="2">
    <source>
        <dbReference type="PROSITE-ProRule" id="PRU00366"/>
    </source>
</evidence>
<evidence type="ECO:0000256" key="3">
    <source>
        <dbReference type="SAM" id="MobiDB-lite"/>
    </source>
</evidence>
<evidence type="ECO:0000269" key="4">
    <source>
    </source>
</evidence>
<evidence type="ECO:0000305" key="5"/>
<keyword id="KW-0010">Activator</keyword>
<keyword id="KW-0238">DNA-binding</keyword>
<keyword id="KW-0936">Ethylene signaling pathway</keyword>
<keyword id="KW-0539">Nucleus</keyword>
<keyword id="KW-0611">Plant defense</keyword>
<keyword id="KW-1185">Reference proteome</keyword>
<keyword id="KW-0804">Transcription</keyword>
<keyword id="KW-0805">Transcription regulation</keyword>
<feature type="chain" id="PRO_0000112566" description="Ethylene-responsive transcription factor 6">
    <location>
        <begin position="1"/>
        <end position="282"/>
    </location>
</feature>
<feature type="DNA-binding region" description="AP2/ERF" evidence="2">
    <location>
        <begin position="136"/>
        <end position="194"/>
    </location>
</feature>
<feature type="region of interest" description="Disordered" evidence="3">
    <location>
        <begin position="77"/>
        <end position="100"/>
    </location>
</feature>
<feature type="compositionally biased region" description="Polar residues" evidence="3">
    <location>
        <begin position="77"/>
        <end position="98"/>
    </location>
</feature>
<feature type="sequence conflict" description="In Ref. 1; BAB12039/BAA31525." evidence="5" ref="1">
    <original>D</original>
    <variation>H</variation>
    <location>
        <position position="41"/>
    </location>
</feature>
<feature type="sequence conflict" description="In Ref. 1; BAB12039/BAA31525." evidence="5" ref="1">
    <original>F</original>
    <variation>S</variation>
    <location>
        <position position="67"/>
    </location>
</feature>
<feature type="sequence conflict" description="In Ref. 1; BAB12039/BAA31525." evidence="5" ref="1">
    <original>D</original>
    <variation>E</variation>
    <location>
        <position position="70"/>
    </location>
</feature>
<feature type="sequence conflict" description="In Ref. 1; BAB12039/BAA31525." evidence="5" ref="1">
    <original>PS</original>
    <variation>SI</variation>
    <location>
        <begin position="76"/>
        <end position="77"/>
    </location>
</feature>
<feature type="sequence conflict" description="In Ref. 1; BAB12039/BAA31525." evidence="5" ref="1">
    <original>V</original>
    <variation>E</variation>
    <location>
        <position position="126"/>
    </location>
</feature>
<feature type="sequence conflict" description="In Ref. 1; BAB12039/BAA31525." evidence="5" ref="1">
    <location>
        <position position="212"/>
    </location>
</feature>
<feature type="sequence conflict" description="In Ref. 1; BAB12039/BAA31525." evidence="5" ref="1">
    <original>G</original>
    <variation>S</variation>
    <location>
        <position position="218"/>
    </location>
</feature>
<feature type="sequence conflict" description="In Ref. 1; BAB12039/BAA31525." evidence="5" ref="1">
    <original>T</original>
    <variation>K</variation>
    <location>
        <position position="224"/>
    </location>
</feature>
<feature type="sequence conflict" description="In Ref. 5; AAL38331/AAM47907." evidence="5" ref="5">
    <original>V</original>
    <variation>M</variation>
    <location>
        <position position="225"/>
    </location>
</feature>
<feature type="sequence conflict" description="In Ref. 1; BAB12039/BAA31525." evidence="5" ref="1">
    <original>E</original>
    <variation>K</variation>
    <location>
        <position position="227"/>
    </location>
</feature>
<feature type="sequence conflict" description="In Ref. 1; BAB12039/BAA31525." evidence="5" ref="1">
    <original>T</original>
    <variation>K</variation>
    <location>
        <position position="232"/>
    </location>
</feature>
<feature type="sequence conflict" description="In Ref. 1; BAB12039/BAA31525." evidence="5" ref="1">
    <original>D</original>
    <variation>A</variation>
    <location>
        <position position="237"/>
    </location>
</feature>
<feature type="sequence conflict" description="In Ref. 1; BAB12039/BAA31525." evidence="5" ref="1">
    <original>G</original>
    <variation>D</variation>
    <location>
        <position position="240"/>
    </location>
</feature>
<reference key="1">
    <citation type="submission" date="1997-10" db="EMBL/GenBank/DDBJ databases">
        <title>Arabidopsis ethylene responsive element binding factor (AtERFs).</title>
        <authorList>
            <person name="Usui A."/>
            <person name="Ohta M."/>
            <person name="Shinshi H."/>
            <person name="Ohme-Takagi M."/>
        </authorList>
    </citation>
    <scope>NUCLEOTIDE SEQUENCE [MRNA]</scope>
</reference>
<reference key="2">
    <citation type="journal article" date="1998" name="Nature">
        <title>Analysis of 1.9 Mb of contiguous sequence from chromosome 4 of Arabidopsis thaliana.</title>
        <authorList>
            <person name="Bevan M."/>
            <person name="Bancroft I."/>
            <person name="Bent E."/>
            <person name="Love K."/>
            <person name="Goodman H.M."/>
            <person name="Dean C."/>
            <person name="Bergkamp R."/>
            <person name="Dirkse W."/>
            <person name="van Staveren M."/>
            <person name="Stiekema W."/>
            <person name="Drost L."/>
            <person name="Ridley P."/>
            <person name="Hudson S.-A."/>
            <person name="Patel K."/>
            <person name="Murphy G."/>
            <person name="Piffanelli P."/>
            <person name="Wedler H."/>
            <person name="Wedler E."/>
            <person name="Wambutt R."/>
            <person name="Weitzenegger T."/>
            <person name="Pohl T."/>
            <person name="Terryn N."/>
            <person name="Gielen J."/>
            <person name="Villarroel R."/>
            <person name="De Clercq R."/>
            <person name="van Montagu M."/>
            <person name="Lecharny A."/>
            <person name="Aubourg S."/>
            <person name="Gy I."/>
            <person name="Kreis M."/>
            <person name="Lao N."/>
            <person name="Kavanagh T."/>
            <person name="Hempel S."/>
            <person name="Kotter P."/>
            <person name="Entian K.-D."/>
            <person name="Rieger M."/>
            <person name="Schaefer M."/>
            <person name="Funk B."/>
            <person name="Mueller-Auer S."/>
            <person name="Silvey M."/>
            <person name="James R."/>
            <person name="Monfort A."/>
            <person name="Pons A."/>
            <person name="Puigdomenech P."/>
            <person name="Douka A."/>
            <person name="Voukelatou E."/>
            <person name="Milioni D."/>
            <person name="Hatzopoulos P."/>
            <person name="Piravandi E."/>
            <person name="Obermaier B."/>
            <person name="Hilbert H."/>
            <person name="Duesterhoeft A."/>
            <person name="Moores T."/>
            <person name="Jones J.D.G."/>
            <person name="Eneva T."/>
            <person name="Palme K."/>
            <person name="Benes V."/>
            <person name="Rechmann S."/>
            <person name="Ansorge W."/>
            <person name="Cooke R."/>
            <person name="Berger C."/>
            <person name="Delseny M."/>
            <person name="Voet M."/>
            <person name="Volckaert G."/>
            <person name="Mewes H.-W."/>
            <person name="Klosterman S."/>
            <person name="Schueller C."/>
            <person name="Chalwatzis N."/>
        </authorList>
    </citation>
    <scope>NUCLEOTIDE SEQUENCE [LARGE SCALE GENOMIC DNA]</scope>
    <source>
        <strain>cv. Columbia</strain>
    </source>
</reference>
<reference key="3">
    <citation type="journal article" date="1999" name="Nature">
        <title>Sequence and analysis of chromosome 4 of the plant Arabidopsis thaliana.</title>
        <authorList>
            <person name="Mayer K.F.X."/>
            <person name="Schueller C."/>
            <person name="Wambutt R."/>
            <person name="Murphy G."/>
            <person name="Volckaert G."/>
            <person name="Pohl T."/>
            <person name="Duesterhoeft A."/>
            <person name="Stiekema W."/>
            <person name="Entian K.-D."/>
            <person name="Terryn N."/>
            <person name="Harris B."/>
            <person name="Ansorge W."/>
            <person name="Brandt P."/>
            <person name="Grivell L.A."/>
            <person name="Rieger M."/>
            <person name="Weichselgartner M."/>
            <person name="de Simone V."/>
            <person name="Obermaier B."/>
            <person name="Mache R."/>
            <person name="Mueller M."/>
            <person name="Kreis M."/>
            <person name="Delseny M."/>
            <person name="Puigdomenech P."/>
            <person name="Watson M."/>
            <person name="Schmidtheini T."/>
            <person name="Reichert B."/>
            <person name="Portetelle D."/>
            <person name="Perez-Alonso M."/>
            <person name="Boutry M."/>
            <person name="Bancroft I."/>
            <person name="Vos P."/>
            <person name="Hoheisel J."/>
            <person name="Zimmermann W."/>
            <person name="Wedler H."/>
            <person name="Ridley P."/>
            <person name="Langham S.-A."/>
            <person name="McCullagh B."/>
            <person name="Bilham L."/>
            <person name="Robben J."/>
            <person name="van der Schueren J."/>
            <person name="Grymonprez B."/>
            <person name="Chuang Y.-J."/>
            <person name="Vandenbussche F."/>
            <person name="Braeken M."/>
            <person name="Weltjens I."/>
            <person name="Voet M."/>
            <person name="Bastiaens I."/>
            <person name="Aert R."/>
            <person name="Defoor E."/>
            <person name="Weitzenegger T."/>
            <person name="Bothe G."/>
            <person name="Ramsperger U."/>
            <person name="Hilbert H."/>
            <person name="Braun M."/>
            <person name="Holzer E."/>
            <person name="Brandt A."/>
            <person name="Peters S."/>
            <person name="van Staveren M."/>
            <person name="Dirkse W."/>
            <person name="Mooijman P."/>
            <person name="Klein Lankhorst R."/>
            <person name="Rose M."/>
            <person name="Hauf J."/>
            <person name="Koetter P."/>
            <person name="Berneiser S."/>
            <person name="Hempel S."/>
            <person name="Feldpausch M."/>
            <person name="Lamberth S."/>
            <person name="Van den Daele H."/>
            <person name="De Keyser A."/>
            <person name="Buysshaert C."/>
            <person name="Gielen J."/>
            <person name="Villarroel R."/>
            <person name="De Clercq R."/>
            <person name="van Montagu M."/>
            <person name="Rogers J."/>
            <person name="Cronin A."/>
            <person name="Quail M.A."/>
            <person name="Bray-Allen S."/>
            <person name="Clark L."/>
            <person name="Doggett J."/>
            <person name="Hall S."/>
            <person name="Kay M."/>
            <person name="Lennard N."/>
            <person name="McLay K."/>
            <person name="Mayes R."/>
            <person name="Pettett A."/>
            <person name="Rajandream M.A."/>
            <person name="Lyne M."/>
            <person name="Benes V."/>
            <person name="Rechmann S."/>
            <person name="Borkova D."/>
            <person name="Bloecker H."/>
            <person name="Scharfe M."/>
            <person name="Grimm M."/>
            <person name="Loehnert T.-H."/>
            <person name="Dose S."/>
            <person name="de Haan M."/>
            <person name="Maarse A.C."/>
            <person name="Schaefer M."/>
            <person name="Mueller-Auer S."/>
            <person name="Gabel C."/>
            <person name="Fuchs M."/>
            <person name="Fartmann B."/>
            <person name="Granderath K."/>
            <person name="Dauner D."/>
            <person name="Herzl A."/>
            <person name="Neumann S."/>
            <person name="Argiriou A."/>
            <person name="Vitale D."/>
            <person name="Liguori R."/>
            <person name="Piravandi E."/>
            <person name="Massenet O."/>
            <person name="Quigley F."/>
            <person name="Clabauld G."/>
            <person name="Muendlein A."/>
            <person name="Felber R."/>
            <person name="Schnabl S."/>
            <person name="Hiller R."/>
            <person name="Schmidt W."/>
            <person name="Lecharny A."/>
            <person name="Aubourg S."/>
            <person name="Chefdor F."/>
            <person name="Cooke R."/>
            <person name="Berger C."/>
            <person name="Monfort A."/>
            <person name="Casacuberta E."/>
            <person name="Gibbons T."/>
            <person name="Weber N."/>
            <person name="Vandenbol M."/>
            <person name="Bargues M."/>
            <person name="Terol J."/>
            <person name="Torres A."/>
            <person name="Perez-Perez A."/>
            <person name="Purnelle B."/>
            <person name="Bent E."/>
            <person name="Johnson S."/>
            <person name="Tacon D."/>
            <person name="Jesse T."/>
            <person name="Heijnen L."/>
            <person name="Schwarz S."/>
            <person name="Scholler P."/>
            <person name="Heber S."/>
            <person name="Francs P."/>
            <person name="Bielke C."/>
            <person name="Frishman D."/>
            <person name="Haase D."/>
            <person name="Lemcke K."/>
            <person name="Mewes H.-W."/>
            <person name="Stocker S."/>
            <person name="Zaccaria P."/>
            <person name="Bevan M."/>
            <person name="Wilson R.K."/>
            <person name="de la Bastide M."/>
            <person name="Habermann K."/>
            <person name="Parnell L."/>
            <person name="Dedhia N."/>
            <person name="Gnoj L."/>
            <person name="Schutz K."/>
            <person name="Huang E."/>
            <person name="Spiegel L."/>
            <person name="Sekhon M."/>
            <person name="Murray J."/>
            <person name="Sheet P."/>
            <person name="Cordes M."/>
            <person name="Abu-Threideh J."/>
            <person name="Stoneking T."/>
            <person name="Kalicki J."/>
            <person name="Graves T."/>
            <person name="Harmon G."/>
            <person name="Edwards J."/>
            <person name="Latreille P."/>
            <person name="Courtney L."/>
            <person name="Cloud J."/>
            <person name="Abbott A."/>
            <person name="Scott K."/>
            <person name="Johnson D."/>
            <person name="Minx P."/>
            <person name="Bentley D."/>
            <person name="Fulton B."/>
            <person name="Miller N."/>
            <person name="Greco T."/>
            <person name="Kemp K."/>
            <person name="Kramer J."/>
            <person name="Fulton L."/>
            <person name="Mardis E."/>
            <person name="Dante M."/>
            <person name="Pepin K."/>
            <person name="Hillier L.W."/>
            <person name="Nelson J."/>
            <person name="Spieth J."/>
            <person name="Ryan E."/>
            <person name="Andrews S."/>
            <person name="Geisel C."/>
            <person name="Layman D."/>
            <person name="Du H."/>
            <person name="Ali J."/>
            <person name="Berghoff A."/>
            <person name="Jones K."/>
            <person name="Drone K."/>
            <person name="Cotton M."/>
            <person name="Joshu C."/>
            <person name="Antonoiu B."/>
            <person name="Zidanic M."/>
            <person name="Strong C."/>
            <person name="Sun H."/>
            <person name="Lamar B."/>
            <person name="Yordan C."/>
            <person name="Ma P."/>
            <person name="Zhong J."/>
            <person name="Preston R."/>
            <person name="Vil D."/>
            <person name="Shekher M."/>
            <person name="Matero A."/>
            <person name="Shah R."/>
            <person name="Swaby I.K."/>
            <person name="O'Shaughnessy A."/>
            <person name="Rodriguez M."/>
            <person name="Hoffman J."/>
            <person name="Till S."/>
            <person name="Granat S."/>
            <person name="Shohdy N."/>
            <person name="Hasegawa A."/>
            <person name="Hameed A."/>
            <person name="Lodhi M."/>
            <person name="Johnson A."/>
            <person name="Chen E."/>
            <person name="Marra M.A."/>
            <person name="Martienssen R."/>
            <person name="McCombie W.R."/>
        </authorList>
    </citation>
    <scope>NUCLEOTIDE SEQUENCE [LARGE SCALE GENOMIC DNA]</scope>
    <source>
        <strain>cv. Columbia</strain>
    </source>
</reference>
<reference key="4">
    <citation type="journal article" date="2017" name="Plant J.">
        <title>Araport11: a complete reannotation of the Arabidopsis thaliana reference genome.</title>
        <authorList>
            <person name="Cheng C.Y."/>
            <person name="Krishnakumar V."/>
            <person name="Chan A.P."/>
            <person name="Thibaud-Nissen F."/>
            <person name="Schobel S."/>
            <person name="Town C.D."/>
        </authorList>
    </citation>
    <scope>GENOME REANNOTATION</scope>
    <source>
        <strain>cv. Columbia</strain>
    </source>
</reference>
<reference key="5">
    <citation type="journal article" date="2003" name="Science">
        <title>Empirical analysis of transcriptional activity in the Arabidopsis genome.</title>
        <authorList>
            <person name="Yamada K."/>
            <person name="Lim J."/>
            <person name="Dale J.M."/>
            <person name="Chen H."/>
            <person name="Shinn P."/>
            <person name="Palm C.J."/>
            <person name="Southwick A.M."/>
            <person name="Wu H.C."/>
            <person name="Kim C.J."/>
            <person name="Nguyen M."/>
            <person name="Pham P.K."/>
            <person name="Cheuk R.F."/>
            <person name="Karlin-Newmann G."/>
            <person name="Liu S.X."/>
            <person name="Lam B."/>
            <person name="Sakano H."/>
            <person name="Wu T."/>
            <person name="Yu G."/>
            <person name="Miranda M."/>
            <person name="Quach H.L."/>
            <person name="Tripp M."/>
            <person name="Chang C.H."/>
            <person name="Lee J.M."/>
            <person name="Toriumi M.J."/>
            <person name="Chan M.M."/>
            <person name="Tang C.C."/>
            <person name="Onodera C.S."/>
            <person name="Deng J.M."/>
            <person name="Akiyama K."/>
            <person name="Ansari Y."/>
            <person name="Arakawa T."/>
            <person name="Banh J."/>
            <person name="Banno F."/>
            <person name="Bowser L."/>
            <person name="Brooks S.Y."/>
            <person name="Carninci P."/>
            <person name="Chao Q."/>
            <person name="Choy N."/>
            <person name="Enju A."/>
            <person name="Goldsmith A.D."/>
            <person name="Gurjal M."/>
            <person name="Hansen N.F."/>
            <person name="Hayashizaki Y."/>
            <person name="Johnson-Hopson C."/>
            <person name="Hsuan V.W."/>
            <person name="Iida K."/>
            <person name="Karnes M."/>
            <person name="Khan S."/>
            <person name="Koesema E."/>
            <person name="Ishida J."/>
            <person name="Jiang P.X."/>
            <person name="Jones T."/>
            <person name="Kawai J."/>
            <person name="Kamiya A."/>
            <person name="Meyers C."/>
            <person name="Nakajima M."/>
            <person name="Narusaka M."/>
            <person name="Seki M."/>
            <person name="Sakurai T."/>
            <person name="Satou M."/>
            <person name="Tamse R."/>
            <person name="Vaysberg M."/>
            <person name="Wallender E.K."/>
            <person name="Wong C."/>
            <person name="Yamamura Y."/>
            <person name="Yuan S."/>
            <person name="Shinozaki K."/>
            <person name="Davis R.W."/>
            <person name="Theologis A."/>
            <person name="Ecker J.R."/>
        </authorList>
    </citation>
    <scope>NUCLEOTIDE SEQUENCE [LARGE SCALE MRNA]</scope>
    <source>
        <strain>cv. Columbia</strain>
    </source>
</reference>
<reference key="6">
    <citation type="journal article" date="1998" name="J. Biol. Chem.">
        <title>Unique mode of GCC box recognition by the DNA-binding domain of ethylene-responsive element-binding factor (ERF domain) in plant.</title>
        <authorList>
            <person name="Hao D."/>
            <person name="Ohme-Takagi M."/>
            <person name="Sarai A."/>
        </authorList>
    </citation>
    <scope>FUNCTION</scope>
</reference>
<reference key="7">
    <citation type="journal article" date="2006" name="Plant Physiol.">
        <title>Genome-wide analysis of the ERF gene family in Arabidopsis and rice.</title>
        <authorList>
            <person name="Nakano T."/>
            <person name="Suzuki K."/>
            <person name="Fujimura T."/>
            <person name="Shinshi H."/>
        </authorList>
    </citation>
    <scope>GENE FAMILY</scope>
    <scope>NOMENCLATURE</scope>
</reference>
<dbReference type="EMBL" id="AB008316">
    <property type="protein sequence ID" value="BAB12039.1"/>
    <property type="molecule type" value="mRNA"/>
</dbReference>
<dbReference type="EMBL" id="AB013301">
    <property type="protein sequence ID" value="BAA31525.1"/>
    <property type="molecule type" value="mRNA"/>
</dbReference>
<dbReference type="EMBL" id="Z97343">
    <property type="protein sequence ID" value="CAB10530.1"/>
    <property type="status" value="ALT_SEQ"/>
    <property type="molecule type" value="Genomic_DNA"/>
</dbReference>
<dbReference type="EMBL" id="AL161546">
    <property type="protein sequence ID" value="CAB78752.1"/>
    <property type="status" value="ALT_SEQ"/>
    <property type="molecule type" value="Genomic_DNA"/>
</dbReference>
<dbReference type="EMBL" id="CP002687">
    <property type="protein sequence ID" value="AEE83902.1"/>
    <property type="molecule type" value="Genomic_DNA"/>
</dbReference>
<dbReference type="EMBL" id="AY065155">
    <property type="protein sequence ID" value="AAL38331.1"/>
    <property type="molecule type" value="mRNA"/>
</dbReference>
<dbReference type="EMBL" id="AY114588">
    <property type="protein sequence ID" value="AAM47907.1"/>
    <property type="molecule type" value="mRNA"/>
</dbReference>
<dbReference type="PIR" id="E71444">
    <property type="entry name" value="E71444"/>
</dbReference>
<dbReference type="PIR" id="T52189">
    <property type="entry name" value="T52189"/>
</dbReference>
<dbReference type="RefSeq" id="NP_567529.1">
    <property type="nucleotide sequence ID" value="NM_117854.3"/>
</dbReference>
<dbReference type="SMR" id="Q8VZ91"/>
<dbReference type="BioGRID" id="12756">
    <property type="interactions" value="9"/>
</dbReference>
<dbReference type="FunCoup" id="Q8VZ91">
    <property type="interactions" value="32"/>
</dbReference>
<dbReference type="IntAct" id="Q8VZ91">
    <property type="interactions" value="8"/>
</dbReference>
<dbReference type="STRING" id="3702.Q8VZ91"/>
<dbReference type="iPTMnet" id="Q8VZ91"/>
<dbReference type="PaxDb" id="3702-AT4G17490.1"/>
<dbReference type="EnsemblPlants" id="AT4G17490.1">
    <property type="protein sequence ID" value="AT4G17490.1"/>
    <property type="gene ID" value="AT4G17490"/>
</dbReference>
<dbReference type="GeneID" id="827463"/>
<dbReference type="Gramene" id="AT4G17490.1">
    <property type="protein sequence ID" value="AT4G17490.1"/>
    <property type="gene ID" value="AT4G17490"/>
</dbReference>
<dbReference type="KEGG" id="ath:AT4G17490"/>
<dbReference type="Araport" id="AT4G17490"/>
<dbReference type="TAIR" id="AT4G17490">
    <property type="gene designation" value="ERF6"/>
</dbReference>
<dbReference type="eggNOG" id="ENOG502RXE3">
    <property type="taxonomic scope" value="Eukaryota"/>
</dbReference>
<dbReference type="HOGENOM" id="CLU_058713_0_1_1"/>
<dbReference type="InParanoid" id="Q8VZ91"/>
<dbReference type="OMA" id="SRTEWIQ"/>
<dbReference type="PhylomeDB" id="Q8VZ91"/>
<dbReference type="PRO" id="PR:Q8VZ91"/>
<dbReference type="Proteomes" id="UP000006548">
    <property type="component" value="Chromosome 4"/>
</dbReference>
<dbReference type="ExpressionAtlas" id="Q8VZ91">
    <property type="expression patterns" value="baseline and differential"/>
</dbReference>
<dbReference type="GO" id="GO:0005634">
    <property type="term" value="C:nucleus"/>
    <property type="evidence" value="ECO:0007669"/>
    <property type="project" value="UniProtKB-SubCell"/>
</dbReference>
<dbReference type="GO" id="GO:0003700">
    <property type="term" value="F:DNA-binding transcription factor activity"/>
    <property type="evidence" value="ECO:0000314"/>
    <property type="project" value="TAIR"/>
</dbReference>
<dbReference type="GO" id="GO:0000976">
    <property type="term" value="F:transcription cis-regulatory region binding"/>
    <property type="evidence" value="ECO:0000353"/>
    <property type="project" value="TAIR"/>
</dbReference>
<dbReference type="GO" id="GO:0051301">
    <property type="term" value="P:cell division"/>
    <property type="evidence" value="ECO:0000270"/>
    <property type="project" value="TAIR"/>
</dbReference>
<dbReference type="GO" id="GO:0006952">
    <property type="term" value="P:defense response"/>
    <property type="evidence" value="ECO:0007669"/>
    <property type="project" value="UniProtKB-KW"/>
</dbReference>
<dbReference type="GO" id="GO:0009873">
    <property type="term" value="P:ethylene-activated signaling pathway"/>
    <property type="evidence" value="ECO:0000304"/>
    <property type="project" value="TAIR"/>
</dbReference>
<dbReference type="GO" id="GO:0010087">
    <property type="term" value="P:phloem or xylem histogenesis"/>
    <property type="evidence" value="ECO:0000270"/>
    <property type="project" value="TAIR"/>
</dbReference>
<dbReference type="GO" id="GO:0009644">
    <property type="term" value="P:response to high light intensity"/>
    <property type="evidence" value="ECO:0000315"/>
    <property type="project" value="TAIR"/>
</dbReference>
<dbReference type="GO" id="GO:0009624">
    <property type="term" value="P:response to nematode"/>
    <property type="evidence" value="ECO:0000270"/>
    <property type="project" value="TAIR"/>
</dbReference>
<dbReference type="GO" id="GO:0000302">
    <property type="term" value="P:response to reactive oxygen species"/>
    <property type="evidence" value="ECO:0000270"/>
    <property type="project" value="TAIR"/>
</dbReference>
<dbReference type="CDD" id="cd00018">
    <property type="entry name" value="AP2"/>
    <property type="match status" value="1"/>
</dbReference>
<dbReference type="FunFam" id="3.30.730.10:FF:000001">
    <property type="entry name" value="Ethylene-responsive transcription factor 2"/>
    <property type="match status" value="1"/>
</dbReference>
<dbReference type="Gene3D" id="3.30.730.10">
    <property type="entry name" value="AP2/ERF domain"/>
    <property type="match status" value="1"/>
</dbReference>
<dbReference type="InterPro" id="IPR001471">
    <property type="entry name" value="AP2/ERF_dom"/>
</dbReference>
<dbReference type="InterPro" id="IPR036955">
    <property type="entry name" value="AP2/ERF_dom_sf"/>
</dbReference>
<dbReference type="InterPro" id="IPR016177">
    <property type="entry name" value="DNA-bd_dom_sf"/>
</dbReference>
<dbReference type="InterPro" id="IPR044808">
    <property type="entry name" value="ERF_plant"/>
</dbReference>
<dbReference type="PANTHER" id="PTHR31190">
    <property type="entry name" value="DNA-BINDING DOMAIN"/>
    <property type="match status" value="1"/>
</dbReference>
<dbReference type="PANTHER" id="PTHR31190:SF499">
    <property type="entry name" value="ETHYLENE-RESPONSIVE TRANSCRIPTION FACTOR ERF105"/>
    <property type="match status" value="1"/>
</dbReference>
<dbReference type="Pfam" id="PF00847">
    <property type="entry name" value="AP2"/>
    <property type="match status" value="1"/>
</dbReference>
<dbReference type="PRINTS" id="PR00367">
    <property type="entry name" value="ETHRSPELEMNT"/>
</dbReference>
<dbReference type="SMART" id="SM00380">
    <property type="entry name" value="AP2"/>
    <property type="match status" value="1"/>
</dbReference>
<dbReference type="SUPFAM" id="SSF54171">
    <property type="entry name" value="DNA-binding domain"/>
    <property type="match status" value="1"/>
</dbReference>
<dbReference type="PROSITE" id="PS51032">
    <property type="entry name" value="AP2_ERF"/>
    <property type="match status" value="1"/>
</dbReference>
<organism>
    <name type="scientific">Arabidopsis thaliana</name>
    <name type="common">Mouse-ear cress</name>
    <dbReference type="NCBI Taxonomy" id="3702"/>
    <lineage>
        <taxon>Eukaryota</taxon>
        <taxon>Viridiplantae</taxon>
        <taxon>Streptophyta</taxon>
        <taxon>Embryophyta</taxon>
        <taxon>Tracheophyta</taxon>
        <taxon>Spermatophyta</taxon>
        <taxon>Magnoliopsida</taxon>
        <taxon>eudicotyledons</taxon>
        <taxon>Gunneridae</taxon>
        <taxon>Pentapetalae</taxon>
        <taxon>rosids</taxon>
        <taxon>malvids</taxon>
        <taxon>Brassicales</taxon>
        <taxon>Brassicaceae</taxon>
        <taxon>Camelineae</taxon>
        <taxon>Arabidopsis</taxon>
    </lineage>
</organism>
<gene>
    <name type="primary">ERF6</name>
    <name type="synonym">ERF-6</name>
    <name type="synonym">ERF103</name>
    <name type="ordered locus">At4g17490</name>
    <name type="ORF">dl4780c</name>
    <name type="ORF">FCAALL.120</name>
</gene>
<accession>Q8VZ91</accession>
<accession>O23591</accession>
<accession>O80387</accession>
<proteinExistence type="evidence at protein level"/>
<comment type="function">
    <text evidence="1 4">Probably acts as a transcriptional activator. Binds to the GCC-box pathogenesis-related promoter element. May be involved in the regulation of gene expression by stress factors and by components of stress signal transduction pathways (By similarity).</text>
</comment>
<comment type="interaction">
    <interactant intactId="EBI-15208888">
        <id>Q8VZ91</id>
    </interactant>
    <interactant intactId="EBI-25521307">
        <id>Q0V7S5</id>
        <label>AGC1-12</label>
    </interactant>
    <organismsDiffer>false</organismsDiffer>
    <experiments>3</experiments>
</comment>
<comment type="subcellular location">
    <subcellularLocation>
        <location evidence="5">Nucleus</location>
    </subcellularLocation>
</comment>
<comment type="similarity">
    <text evidence="5">Belongs to the AP2/ERF transcription factor family. ERF subfamily.</text>
</comment>
<comment type="sequence caution" evidence="5">
    <conflict type="erroneous gene model prediction">
        <sequence resource="EMBL-CDS" id="CAB10530"/>
    </conflict>
    <text>The predicted gene At4g17490 has been split into 2 genes: At4g17486 and At4g17490.</text>
</comment>
<comment type="sequence caution" evidence="5">
    <conflict type="erroneous gene model prediction">
        <sequence resource="EMBL-CDS" id="CAB78752"/>
    </conflict>
    <text>The predicted gene At4g17490 has been split into 2 genes: At4g17486 and At4g17490.</text>
</comment>
<name>EF103_ARATH</name>
<sequence length="282" mass="32108">MATPNEVSALFLIKKYLLDELSPLPTTATTNRWMNDFTSFDQTGFEFSEFETKPEIIDLVTPKPEIFDFDVKSEIPSESNDSFTFQSNPPRVTVQSNRKPPLKIAPPNRTKWIQFATGNPKPELPVPVVAAEEKRHYRGVRMRPWGKFAAEIRDPTRRGTRVWLGTFETAIEAARAYDKEAFRLRGSKAILNFPLEVDKWNPRAEDGRGLYNKRKRDGEEEEVTVVEKVLKTEESYDVSGGENVESGLTAIDDWDLTEFLSMPLLSPLSPHPPFGYPQLTVV</sequence>